<gene>
    <name evidence="1" type="primary">serS</name>
    <name type="ordered locus">Spea_2229</name>
</gene>
<accession>A8H4R2</accession>
<dbReference type="EC" id="6.1.1.11" evidence="1"/>
<dbReference type="EMBL" id="CP000851">
    <property type="protein sequence ID" value="ABV87549.1"/>
    <property type="molecule type" value="Genomic_DNA"/>
</dbReference>
<dbReference type="RefSeq" id="WP_012155465.1">
    <property type="nucleotide sequence ID" value="NC_009901.1"/>
</dbReference>
<dbReference type="SMR" id="A8H4R2"/>
<dbReference type="STRING" id="398579.Spea_2229"/>
<dbReference type="KEGG" id="spl:Spea_2229"/>
<dbReference type="eggNOG" id="COG0172">
    <property type="taxonomic scope" value="Bacteria"/>
</dbReference>
<dbReference type="HOGENOM" id="CLU_023797_1_1_6"/>
<dbReference type="OrthoDB" id="9804647at2"/>
<dbReference type="UniPathway" id="UPA00906">
    <property type="reaction ID" value="UER00895"/>
</dbReference>
<dbReference type="Proteomes" id="UP000002608">
    <property type="component" value="Chromosome"/>
</dbReference>
<dbReference type="GO" id="GO:0005737">
    <property type="term" value="C:cytoplasm"/>
    <property type="evidence" value="ECO:0007669"/>
    <property type="project" value="UniProtKB-SubCell"/>
</dbReference>
<dbReference type="GO" id="GO:0005524">
    <property type="term" value="F:ATP binding"/>
    <property type="evidence" value="ECO:0007669"/>
    <property type="project" value="UniProtKB-UniRule"/>
</dbReference>
<dbReference type="GO" id="GO:0004828">
    <property type="term" value="F:serine-tRNA ligase activity"/>
    <property type="evidence" value="ECO:0007669"/>
    <property type="project" value="UniProtKB-UniRule"/>
</dbReference>
<dbReference type="GO" id="GO:0016260">
    <property type="term" value="P:selenocysteine biosynthetic process"/>
    <property type="evidence" value="ECO:0007669"/>
    <property type="project" value="UniProtKB-UniRule"/>
</dbReference>
<dbReference type="GO" id="GO:0006434">
    <property type="term" value="P:seryl-tRNA aminoacylation"/>
    <property type="evidence" value="ECO:0007669"/>
    <property type="project" value="UniProtKB-UniRule"/>
</dbReference>
<dbReference type="CDD" id="cd00770">
    <property type="entry name" value="SerRS_core"/>
    <property type="match status" value="1"/>
</dbReference>
<dbReference type="Gene3D" id="3.30.930.10">
    <property type="entry name" value="Bira Bifunctional Protein, Domain 2"/>
    <property type="match status" value="1"/>
</dbReference>
<dbReference type="Gene3D" id="1.10.287.40">
    <property type="entry name" value="Serine-tRNA synthetase, tRNA binding domain"/>
    <property type="match status" value="1"/>
</dbReference>
<dbReference type="HAMAP" id="MF_00176">
    <property type="entry name" value="Ser_tRNA_synth_type1"/>
    <property type="match status" value="1"/>
</dbReference>
<dbReference type="InterPro" id="IPR002314">
    <property type="entry name" value="aa-tRNA-synt_IIb"/>
</dbReference>
<dbReference type="InterPro" id="IPR006195">
    <property type="entry name" value="aa-tRNA-synth_II"/>
</dbReference>
<dbReference type="InterPro" id="IPR045864">
    <property type="entry name" value="aa-tRNA-synth_II/BPL/LPL"/>
</dbReference>
<dbReference type="InterPro" id="IPR002317">
    <property type="entry name" value="Ser-tRNA-ligase_type_1"/>
</dbReference>
<dbReference type="InterPro" id="IPR015866">
    <property type="entry name" value="Ser-tRNA-synth_1_N"/>
</dbReference>
<dbReference type="InterPro" id="IPR042103">
    <property type="entry name" value="SerRS_1_N_sf"/>
</dbReference>
<dbReference type="InterPro" id="IPR033729">
    <property type="entry name" value="SerRS_core"/>
</dbReference>
<dbReference type="InterPro" id="IPR010978">
    <property type="entry name" value="tRNA-bd_arm"/>
</dbReference>
<dbReference type="NCBIfam" id="TIGR00414">
    <property type="entry name" value="serS"/>
    <property type="match status" value="1"/>
</dbReference>
<dbReference type="PANTHER" id="PTHR43697:SF1">
    <property type="entry name" value="SERINE--TRNA LIGASE"/>
    <property type="match status" value="1"/>
</dbReference>
<dbReference type="PANTHER" id="PTHR43697">
    <property type="entry name" value="SERYL-TRNA SYNTHETASE"/>
    <property type="match status" value="1"/>
</dbReference>
<dbReference type="Pfam" id="PF02403">
    <property type="entry name" value="Seryl_tRNA_N"/>
    <property type="match status" value="1"/>
</dbReference>
<dbReference type="Pfam" id="PF00587">
    <property type="entry name" value="tRNA-synt_2b"/>
    <property type="match status" value="1"/>
</dbReference>
<dbReference type="PIRSF" id="PIRSF001529">
    <property type="entry name" value="Ser-tRNA-synth_IIa"/>
    <property type="match status" value="1"/>
</dbReference>
<dbReference type="PRINTS" id="PR00981">
    <property type="entry name" value="TRNASYNTHSER"/>
</dbReference>
<dbReference type="SUPFAM" id="SSF55681">
    <property type="entry name" value="Class II aaRS and biotin synthetases"/>
    <property type="match status" value="1"/>
</dbReference>
<dbReference type="SUPFAM" id="SSF46589">
    <property type="entry name" value="tRNA-binding arm"/>
    <property type="match status" value="1"/>
</dbReference>
<dbReference type="PROSITE" id="PS50862">
    <property type="entry name" value="AA_TRNA_LIGASE_II"/>
    <property type="match status" value="1"/>
</dbReference>
<reference key="1">
    <citation type="submission" date="2007-10" db="EMBL/GenBank/DDBJ databases">
        <title>Complete sequence of Shewanella pealeana ATCC 700345.</title>
        <authorList>
            <consortium name="US DOE Joint Genome Institute"/>
            <person name="Copeland A."/>
            <person name="Lucas S."/>
            <person name="Lapidus A."/>
            <person name="Barry K."/>
            <person name="Glavina del Rio T."/>
            <person name="Dalin E."/>
            <person name="Tice H."/>
            <person name="Pitluck S."/>
            <person name="Chertkov O."/>
            <person name="Brettin T."/>
            <person name="Bruce D."/>
            <person name="Detter J.C."/>
            <person name="Han C."/>
            <person name="Schmutz J."/>
            <person name="Larimer F."/>
            <person name="Land M."/>
            <person name="Hauser L."/>
            <person name="Kyrpides N."/>
            <person name="Kim E."/>
            <person name="Zhao J.-S.Z."/>
            <person name="Manno D."/>
            <person name="Hawari J."/>
            <person name="Richardson P."/>
        </authorList>
    </citation>
    <scope>NUCLEOTIDE SEQUENCE [LARGE SCALE GENOMIC DNA]</scope>
    <source>
        <strain>ATCC 700345 / ANG-SQ1</strain>
    </source>
</reference>
<evidence type="ECO:0000255" key="1">
    <source>
        <dbReference type="HAMAP-Rule" id="MF_00176"/>
    </source>
</evidence>
<sequence>MLDPKFLRSELEMTAERLATRGFILDVERLSKLEETRKSLQVATEELQASRNAISKSIGQAKAKGEDVAPIMAQVGSLGEELDAKKTELAALLEELNAIAMSVPNLPDESVPTGADESENVEVRRWGTPKEFDFAVKDHVELGENIGGLDFKNAVKITGSRFIVMKGQIARMHRALAQFMLDLHTTEHGYTEAYVPLLVNEDSLLGTGQLPKFGEDLFHTKPATEEGQGLSLIPTAEVPLTNLVRDTIVEEDNLPIKLTAHTPCFRSEAGSYGRDTRGLIRQHQFDKVEMVQLVKPEDSMQALEDLTGHAEVVLQKLGLPYRTMVLCTGDMGFGSAKTYDIEVWLPAQDTYREISSCSNMQDFQARRMQARYKGKTDKKPSLLHTLNGSGLAVGRTLVAVLENYQNADGSITVPEALRGYMGGLKKIG</sequence>
<proteinExistence type="inferred from homology"/>
<keyword id="KW-0030">Aminoacyl-tRNA synthetase</keyword>
<keyword id="KW-0067">ATP-binding</keyword>
<keyword id="KW-0963">Cytoplasm</keyword>
<keyword id="KW-0436">Ligase</keyword>
<keyword id="KW-0547">Nucleotide-binding</keyword>
<keyword id="KW-0648">Protein biosynthesis</keyword>
<keyword id="KW-1185">Reference proteome</keyword>
<feature type="chain" id="PRO_1000077215" description="Serine--tRNA ligase">
    <location>
        <begin position="1"/>
        <end position="428"/>
    </location>
</feature>
<feature type="binding site" evidence="1">
    <location>
        <begin position="235"/>
        <end position="237"/>
    </location>
    <ligand>
        <name>L-serine</name>
        <dbReference type="ChEBI" id="CHEBI:33384"/>
    </ligand>
</feature>
<feature type="binding site" evidence="1">
    <location>
        <begin position="266"/>
        <end position="268"/>
    </location>
    <ligand>
        <name>ATP</name>
        <dbReference type="ChEBI" id="CHEBI:30616"/>
    </ligand>
</feature>
<feature type="binding site" evidence="1">
    <location>
        <position position="289"/>
    </location>
    <ligand>
        <name>L-serine</name>
        <dbReference type="ChEBI" id="CHEBI:33384"/>
    </ligand>
</feature>
<feature type="binding site" evidence="1">
    <location>
        <begin position="353"/>
        <end position="356"/>
    </location>
    <ligand>
        <name>ATP</name>
        <dbReference type="ChEBI" id="CHEBI:30616"/>
    </ligand>
</feature>
<feature type="binding site" evidence="1">
    <location>
        <position position="389"/>
    </location>
    <ligand>
        <name>L-serine</name>
        <dbReference type="ChEBI" id="CHEBI:33384"/>
    </ligand>
</feature>
<organism>
    <name type="scientific">Shewanella pealeana (strain ATCC 700345 / ANG-SQ1)</name>
    <dbReference type="NCBI Taxonomy" id="398579"/>
    <lineage>
        <taxon>Bacteria</taxon>
        <taxon>Pseudomonadati</taxon>
        <taxon>Pseudomonadota</taxon>
        <taxon>Gammaproteobacteria</taxon>
        <taxon>Alteromonadales</taxon>
        <taxon>Shewanellaceae</taxon>
        <taxon>Shewanella</taxon>
    </lineage>
</organism>
<name>SYS_SHEPA</name>
<protein>
    <recommendedName>
        <fullName evidence="1">Serine--tRNA ligase</fullName>
        <ecNumber evidence="1">6.1.1.11</ecNumber>
    </recommendedName>
    <alternativeName>
        <fullName evidence="1">Seryl-tRNA synthetase</fullName>
        <shortName evidence="1">SerRS</shortName>
    </alternativeName>
    <alternativeName>
        <fullName evidence="1">Seryl-tRNA(Ser/Sec) synthetase</fullName>
    </alternativeName>
</protein>
<comment type="function">
    <text evidence="1">Catalyzes the attachment of serine to tRNA(Ser). Is also able to aminoacylate tRNA(Sec) with serine, to form the misacylated tRNA L-seryl-tRNA(Sec), which will be further converted into selenocysteinyl-tRNA(Sec).</text>
</comment>
<comment type="catalytic activity">
    <reaction evidence="1">
        <text>tRNA(Ser) + L-serine + ATP = L-seryl-tRNA(Ser) + AMP + diphosphate + H(+)</text>
        <dbReference type="Rhea" id="RHEA:12292"/>
        <dbReference type="Rhea" id="RHEA-COMP:9669"/>
        <dbReference type="Rhea" id="RHEA-COMP:9703"/>
        <dbReference type="ChEBI" id="CHEBI:15378"/>
        <dbReference type="ChEBI" id="CHEBI:30616"/>
        <dbReference type="ChEBI" id="CHEBI:33019"/>
        <dbReference type="ChEBI" id="CHEBI:33384"/>
        <dbReference type="ChEBI" id="CHEBI:78442"/>
        <dbReference type="ChEBI" id="CHEBI:78533"/>
        <dbReference type="ChEBI" id="CHEBI:456215"/>
        <dbReference type="EC" id="6.1.1.11"/>
    </reaction>
</comment>
<comment type="catalytic activity">
    <reaction evidence="1">
        <text>tRNA(Sec) + L-serine + ATP = L-seryl-tRNA(Sec) + AMP + diphosphate + H(+)</text>
        <dbReference type="Rhea" id="RHEA:42580"/>
        <dbReference type="Rhea" id="RHEA-COMP:9742"/>
        <dbReference type="Rhea" id="RHEA-COMP:10128"/>
        <dbReference type="ChEBI" id="CHEBI:15378"/>
        <dbReference type="ChEBI" id="CHEBI:30616"/>
        <dbReference type="ChEBI" id="CHEBI:33019"/>
        <dbReference type="ChEBI" id="CHEBI:33384"/>
        <dbReference type="ChEBI" id="CHEBI:78442"/>
        <dbReference type="ChEBI" id="CHEBI:78533"/>
        <dbReference type="ChEBI" id="CHEBI:456215"/>
        <dbReference type="EC" id="6.1.1.11"/>
    </reaction>
</comment>
<comment type="pathway">
    <text evidence="1">Aminoacyl-tRNA biosynthesis; selenocysteinyl-tRNA(Sec) biosynthesis; L-seryl-tRNA(Sec) from L-serine and tRNA(Sec): step 1/1.</text>
</comment>
<comment type="subunit">
    <text evidence="1">Homodimer. The tRNA molecule binds across the dimer.</text>
</comment>
<comment type="subcellular location">
    <subcellularLocation>
        <location evidence="1">Cytoplasm</location>
    </subcellularLocation>
</comment>
<comment type="domain">
    <text evidence="1">Consists of two distinct domains, a catalytic core and a N-terminal extension that is involved in tRNA binding.</text>
</comment>
<comment type="similarity">
    <text evidence="1">Belongs to the class-II aminoacyl-tRNA synthetase family. Type-1 seryl-tRNA synthetase subfamily.</text>
</comment>